<feature type="chain" id="PRO_0000122982" description="dTTP/UTP pyrophosphatase">
    <location>
        <begin position="1"/>
        <end position="197"/>
    </location>
</feature>
<feature type="active site" description="Proton acceptor" evidence="1">
    <location>
        <position position="70"/>
    </location>
</feature>
<feature type="site" description="Important for substrate specificity" evidence="1">
    <location>
        <position position="12"/>
    </location>
</feature>
<feature type="site" description="Important for substrate specificity" evidence="1">
    <location>
        <position position="71"/>
    </location>
</feature>
<feature type="site" description="Important for substrate specificity" evidence="1">
    <location>
        <position position="153"/>
    </location>
</feature>
<sequence>MTSLYLASGSPRRQELLAQLGVTFERIVTGIEEQRQPQESAQQYVVRLAREKAQAGVAQTAQDLPVLGADTIVILNGEVLEKPRDAEHAAQMLRKLSGQTHQVMTAVALADSQHILDCLVVTDVTFRTLTDEDIAGYVASGEPLDKAGAYGIQGLGGCFVRKINGSFHAVVGLPLVETYELLSNFNALREKRDKHDG</sequence>
<gene>
    <name type="primary">yhdE</name>
    <name type="ordered locus">c4002</name>
</gene>
<protein>
    <recommendedName>
        <fullName evidence="1">dTTP/UTP pyrophosphatase</fullName>
        <shortName evidence="1">dTTPase/UTPase</shortName>
        <ecNumber evidence="1">3.6.1.9</ecNumber>
    </recommendedName>
    <alternativeName>
        <fullName evidence="1">Nucleoside triphosphate pyrophosphatase</fullName>
    </alternativeName>
    <alternativeName>
        <fullName evidence="1">Nucleotide pyrophosphatase</fullName>
        <shortName evidence="1">Nucleotide PPase</shortName>
    </alternativeName>
</protein>
<organism>
    <name type="scientific">Escherichia coli O6:H1 (strain CFT073 / ATCC 700928 / UPEC)</name>
    <dbReference type="NCBI Taxonomy" id="199310"/>
    <lineage>
        <taxon>Bacteria</taxon>
        <taxon>Pseudomonadati</taxon>
        <taxon>Pseudomonadota</taxon>
        <taxon>Gammaproteobacteria</taxon>
        <taxon>Enterobacterales</taxon>
        <taxon>Enterobacteriaceae</taxon>
        <taxon>Escherichia</taxon>
    </lineage>
</organism>
<proteinExistence type="inferred from homology"/>
<evidence type="ECO:0000255" key="1">
    <source>
        <dbReference type="HAMAP-Rule" id="MF_00528"/>
    </source>
</evidence>
<name>NTPPA_ECOL6</name>
<keyword id="KW-0963">Cytoplasm</keyword>
<keyword id="KW-0378">Hydrolase</keyword>
<keyword id="KW-0546">Nucleotide metabolism</keyword>
<keyword id="KW-1185">Reference proteome</keyword>
<dbReference type="EC" id="3.6.1.9" evidence="1"/>
<dbReference type="EMBL" id="AE014075">
    <property type="protein sequence ID" value="AAN82442.1"/>
    <property type="molecule type" value="Genomic_DNA"/>
</dbReference>
<dbReference type="RefSeq" id="WP_000203095.1">
    <property type="nucleotide sequence ID" value="NZ_CP051263.1"/>
</dbReference>
<dbReference type="SMR" id="Q8FD47"/>
<dbReference type="STRING" id="199310.c4002"/>
<dbReference type="KEGG" id="ecc:c4002"/>
<dbReference type="eggNOG" id="COG0424">
    <property type="taxonomic scope" value="Bacteria"/>
</dbReference>
<dbReference type="HOGENOM" id="CLU_040416_2_1_6"/>
<dbReference type="BioCyc" id="ECOL199310:C4002-MONOMER"/>
<dbReference type="Proteomes" id="UP000001410">
    <property type="component" value="Chromosome"/>
</dbReference>
<dbReference type="GO" id="GO:0005737">
    <property type="term" value="C:cytoplasm"/>
    <property type="evidence" value="ECO:0007669"/>
    <property type="project" value="UniProtKB-SubCell"/>
</dbReference>
<dbReference type="GO" id="GO:0036218">
    <property type="term" value="F:dTTP diphosphatase activity"/>
    <property type="evidence" value="ECO:0007669"/>
    <property type="project" value="RHEA"/>
</dbReference>
<dbReference type="GO" id="GO:0036221">
    <property type="term" value="F:UTP diphosphatase activity"/>
    <property type="evidence" value="ECO:0007669"/>
    <property type="project" value="RHEA"/>
</dbReference>
<dbReference type="GO" id="GO:0009117">
    <property type="term" value="P:nucleotide metabolic process"/>
    <property type="evidence" value="ECO:0007669"/>
    <property type="project" value="UniProtKB-KW"/>
</dbReference>
<dbReference type="CDD" id="cd00555">
    <property type="entry name" value="Maf"/>
    <property type="match status" value="1"/>
</dbReference>
<dbReference type="FunFam" id="3.90.950.10:FF:000004">
    <property type="entry name" value="dTTP/UTP pyrophosphatase"/>
    <property type="match status" value="1"/>
</dbReference>
<dbReference type="Gene3D" id="3.90.950.10">
    <property type="match status" value="1"/>
</dbReference>
<dbReference type="HAMAP" id="MF_00528">
    <property type="entry name" value="Maf"/>
    <property type="match status" value="1"/>
</dbReference>
<dbReference type="InterPro" id="IPR029001">
    <property type="entry name" value="ITPase-like_fam"/>
</dbReference>
<dbReference type="InterPro" id="IPR003697">
    <property type="entry name" value="Maf-like"/>
</dbReference>
<dbReference type="NCBIfam" id="TIGR00172">
    <property type="entry name" value="maf"/>
    <property type="match status" value="1"/>
</dbReference>
<dbReference type="PANTHER" id="PTHR43213">
    <property type="entry name" value="BIFUNCTIONAL DTTP/UTP PYROPHOSPHATASE/METHYLTRANSFERASE PROTEIN-RELATED"/>
    <property type="match status" value="1"/>
</dbReference>
<dbReference type="PANTHER" id="PTHR43213:SF5">
    <property type="entry name" value="BIFUNCTIONAL DTTP_UTP PYROPHOSPHATASE_METHYLTRANSFERASE PROTEIN-RELATED"/>
    <property type="match status" value="1"/>
</dbReference>
<dbReference type="Pfam" id="PF02545">
    <property type="entry name" value="Maf"/>
    <property type="match status" value="1"/>
</dbReference>
<dbReference type="PIRSF" id="PIRSF006305">
    <property type="entry name" value="Maf"/>
    <property type="match status" value="1"/>
</dbReference>
<dbReference type="SUPFAM" id="SSF52972">
    <property type="entry name" value="ITPase-like"/>
    <property type="match status" value="1"/>
</dbReference>
<accession>Q8FD47</accession>
<reference key="1">
    <citation type="journal article" date="2002" name="Proc. Natl. Acad. Sci. U.S.A.">
        <title>Extensive mosaic structure revealed by the complete genome sequence of uropathogenic Escherichia coli.</title>
        <authorList>
            <person name="Welch R.A."/>
            <person name="Burland V."/>
            <person name="Plunkett G. III"/>
            <person name="Redford P."/>
            <person name="Roesch P."/>
            <person name="Rasko D."/>
            <person name="Buckles E.L."/>
            <person name="Liou S.-R."/>
            <person name="Boutin A."/>
            <person name="Hackett J."/>
            <person name="Stroud D."/>
            <person name="Mayhew G.F."/>
            <person name="Rose D.J."/>
            <person name="Zhou S."/>
            <person name="Schwartz D.C."/>
            <person name="Perna N.T."/>
            <person name="Mobley H.L.T."/>
            <person name="Donnenberg M.S."/>
            <person name="Blattner F.R."/>
        </authorList>
    </citation>
    <scope>NUCLEOTIDE SEQUENCE [LARGE SCALE GENOMIC DNA]</scope>
    <source>
        <strain>CFT073 / ATCC 700928 / UPEC</strain>
    </source>
</reference>
<comment type="function">
    <text evidence="1">Nucleoside triphosphate pyrophosphatase that hydrolyzes dTTP and UTP. May have a dual role in cell division arrest and in preventing the incorporation of modified nucleotides into cellular nucleic acids.</text>
</comment>
<comment type="catalytic activity">
    <reaction evidence="1">
        <text>dTTP + H2O = dTMP + diphosphate + H(+)</text>
        <dbReference type="Rhea" id="RHEA:28534"/>
        <dbReference type="ChEBI" id="CHEBI:15377"/>
        <dbReference type="ChEBI" id="CHEBI:15378"/>
        <dbReference type="ChEBI" id="CHEBI:33019"/>
        <dbReference type="ChEBI" id="CHEBI:37568"/>
        <dbReference type="ChEBI" id="CHEBI:63528"/>
        <dbReference type="EC" id="3.6.1.9"/>
    </reaction>
</comment>
<comment type="catalytic activity">
    <reaction evidence="1">
        <text>UTP + H2O = UMP + diphosphate + H(+)</text>
        <dbReference type="Rhea" id="RHEA:29395"/>
        <dbReference type="ChEBI" id="CHEBI:15377"/>
        <dbReference type="ChEBI" id="CHEBI:15378"/>
        <dbReference type="ChEBI" id="CHEBI:33019"/>
        <dbReference type="ChEBI" id="CHEBI:46398"/>
        <dbReference type="ChEBI" id="CHEBI:57865"/>
        <dbReference type="EC" id="3.6.1.9"/>
    </reaction>
</comment>
<comment type="cofactor">
    <cofactor evidence="1">
        <name>a divalent metal cation</name>
        <dbReference type="ChEBI" id="CHEBI:60240"/>
    </cofactor>
</comment>
<comment type="subcellular location">
    <subcellularLocation>
        <location evidence="1">Cytoplasm</location>
    </subcellularLocation>
</comment>
<comment type="similarity">
    <text evidence="1">Belongs to the Maf family. YhdE subfamily.</text>
</comment>